<dbReference type="EMBL" id="AB044534">
    <property type="protein sequence ID" value="BAB19051.1"/>
    <property type="molecule type" value="mRNA"/>
</dbReference>
<dbReference type="SMR" id="Q9DED5"/>
<dbReference type="Proteomes" id="UP000515129">
    <property type="component" value="Unplaced"/>
</dbReference>
<dbReference type="GO" id="GO:0005737">
    <property type="term" value="C:cytoplasm"/>
    <property type="evidence" value="ECO:0000250"/>
    <property type="project" value="UniProtKB"/>
</dbReference>
<dbReference type="GO" id="GO:0043005">
    <property type="term" value="C:neuron projection"/>
    <property type="evidence" value="ECO:0007669"/>
    <property type="project" value="TreeGrafter"/>
</dbReference>
<dbReference type="GO" id="GO:0005634">
    <property type="term" value="C:nucleus"/>
    <property type="evidence" value="ECO:0000250"/>
    <property type="project" value="UniProtKB"/>
</dbReference>
<dbReference type="GO" id="GO:0045202">
    <property type="term" value="C:synapse"/>
    <property type="evidence" value="ECO:0007669"/>
    <property type="project" value="TreeGrafter"/>
</dbReference>
<dbReference type="GO" id="GO:0046872">
    <property type="term" value="F:metal ion binding"/>
    <property type="evidence" value="ECO:0007669"/>
    <property type="project" value="UniProtKB-KW"/>
</dbReference>
<dbReference type="GO" id="GO:0035925">
    <property type="term" value="F:mRNA 3'-UTR AU-rich region binding"/>
    <property type="evidence" value="ECO:0000250"/>
    <property type="project" value="UniProtKB"/>
</dbReference>
<dbReference type="GO" id="GO:0000900">
    <property type="term" value="F:mRNA regulatory element binding translation repressor activity"/>
    <property type="evidence" value="ECO:0000250"/>
    <property type="project" value="UniProtKB"/>
</dbReference>
<dbReference type="GO" id="GO:0043022">
    <property type="term" value="F:ribosome binding"/>
    <property type="evidence" value="ECO:0007669"/>
    <property type="project" value="TreeGrafter"/>
</dbReference>
<dbReference type="GO" id="GO:0008135">
    <property type="term" value="F:translation factor activity, RNA binding"/>
    <property type="evidence" value="ECO:0007669"/>
    <property type="project" value="TreeGrafter"/>
</dbReference>
<dbReference type="GO" id="GO:0071230">
    <property type="term" value="P:cellular response to amino acid stimulus"/>
    <property type="evidence" value="ECO:0000250"/>
    <property type="project" value="UniProtKB"/>
</dbReference>
<dbReference type="GO" id="GO:0071456">
    <property type="term" value="P:cellular response to hypoxia"/>
    <property type="evidence" value="ECO:0000250"/>
    <property type="project" value="UniProtKB"/>
</dbReference>
<dbReference type="GO" id="GO:0032869">
    <property type="term" value="P:cellular response to insulin stimulus"/>
    <property type="evidence" value="ECO:0000250"/>
    <property type="project" value="UniProtKB"/>
</dbReference>
<dbReference type="GO" id="GO:0006397">
    <property type="term" value="P:mRNA processing"/>
    <property type="evidence" value="ECO:0007669"/>
    <property type="project" value="UniProtKB-KW"/>
</dbReference>
<dbReference type="GO" id="GO:2000766">
    <property type="term" value="P:negative regulation of cytoplasmic translation"/>
    <property type="evidence" value="ECO:0000250"/>
    <property type="project" value="UniProtKB"/>
</dbReference>
<dbReference type="GO" id="GO:0031440">
    <property type="term" value="P:regulation of mRNA 3'-end processing"/>
    <property type="evidence" value="ECO:0000250"/>
    <property type="project" value="UniProtKB"/>
</dbReference>
<dbReference type="CDD" id="cd19757">
    <property type="entry name" value="Bbox1"/>
    <property type="match status" value="1"/>
</dbReference>
<dbReference type="CDD" id="cd12723">
    <property type="entry name" value="RRM1_CPEB1"/>
    <property type="match status" value="1"/>
</dbReference>
<dbReference type="CDD" id="cd12725">
    <property type="entry name" value="RRM2_CPEB1"/>
    <property type="match status" value="1"/>
</dbReference>
<dbReference type="FunFam" id="3.30.70.330:FF:000054">
    <property type="entry name" value="Cytoplasmic polyadenylation element-binding protein 1"/>
    <property type="match status" value="1"/>
</dbReference>
<dbReference type="FunFam" id="3.30.70.330:FF:000086">
    <property type="entry name" value="Putative Cytoplasmic polyadenylation element-binding protein 1"/>
    <property type="match status" value="1"/>
</dbReference>
<dbReference type="FunFam" id="4.10.640.40:FF:000002">
    <property type="entry name" value="Putative Cytoplasmic polyadenylation element-binding protein 1"/>
    <property type="match status" value="1"/>
</dbReference>
<dbReference type="Gene3D" id="3.30.70.330">
    <property type="match status" value="2"/>
</dbReference>
<dbReference type="Gene3D" id="4.10.640.40">
    <property type="entry name" value="Cytoplasmic polyadenylation element-binding protein, ZZ domain"/>
    <property type="match status" value="1"/>
</dbReference>
<dbReference type="InterPro" id="IPR032292">
    <property type="entry name" value="CEBP1_N"/>
</dbReference>
<dbReference type="InterPro" id="IPR032296">
    <property type="entry name" value="CEBP_ZZ"/>
</dbReference>
<dbReference type="InterPro" id="IPR038446">
    <property type="entry name" value="CEBP_ZZ_sf"/>
</dbReference>
<dbReference type="InterPro" id="IPR034819">
    <property type="entry name" value="CPEB"/>
</dbReference>
<dbReference type="InterPro" id="IPR034977">
    <property type="entry name" value="CPEB1_RRM1"/>
</dbReference>
<dbReference type="InterPro" id="IPR012677">
    <property type="entry name" value="Nucleotide-bd_a/b_plait_sf"/>
</dbReference>
<dbReference type="InterPro" id="IPR035979">
    <property type="entry name" value="RBD_domain_sf"/>
</dbReference>
<dbReference type="InterPro" id="IPR000504">
    <property type="entry name" value="RRM_dom"/>
</dbReference>
<dbReference type="PANTHER" id="PTHR12566">
    <property type="entry name" value="CYTOPLASMIC POLYADENYLATION ELEMENT BINDING PROTEIN CPEB"/>
    <property type="match status" value="1"/>
</dbReference>
<dbReference type="PANTHER" id="PTHR12566:SF9">
    <property type="entry name" value="CYTOPLASMIC POLYADENYLATION ELEMENT-BINDING PROTEIN 1"/>
    <property type="match status" value="1"/>
</dbReference>
<dbReference type="Pfam" id="PF16368">
    <property type="entry name" value="CEBP1_N"/>
    <property type="match status" value="1"/>
</dbReference>
<dbReference type="Pfam" id="PF16366">
    <property type="entry name" value="CEBP_ZZ"/>
    <property type="match status" value="1"/>
</dbReference>
<dbReference type="Pfam" id="PF16367">
    <property type="entry name" value="RRM_7"/>
    <property type="match status" value="1"/>
</dbReference>
<dbReference type="SMART" id="SM00360">
    <property type="entry name" value="RRM"/>
    <property type="match status" value="2"/>
</dbReference>
<dbReference type="SUPFAM" id="SSF54928">
    <property type="entry name" value="RNA-binding domain, RBD"/>
    <property type="match status" value="1"/>
</dbReference>
<dbReference type="PROSITE" id="PS50102">
    <property type="entry name" value="RRM"/>
    <property type="match status" value="1"/>
</dbReference>
<accession>Q9DED5</accession>
<evidence type="ECO:0000250" key="1"/>
<evidence type="ECO:0000250" key="2">
    <source>
        <dbReference type="UniProtKB" id="P70166"/>
    </source>
</evidence>
<evidence type="ECO:0000250" key="3">
    <source>
        <dbReference type="UniProtKB" id="Q9BZB8"/>
    </source>
</evidence>
<evidence type="ECO:0000255" key="4">
    <source>
        <dbReference type="PROSITE-ProRule" id="PRU00176"/>
    </source>
</evidence>
<evidence type="ECO:0000256" key="5">
    <source>
        <dbReference type="SAM" id="MobiDB-lite"/>
    </source>
</evidence>
<evidence type="ECO:0000305" key="6"/>
<protein>
    <recommendedName>
        <fullName>Cytoplasmic polyadenylation element-binding protein 1</fullName>
        <shortName>CPE-BP1</shortName>
        <shortName>CPE-binding protein 1</shortName>
        <shortName>CPEB-1</shortName>
    </recommendedName>
</protein>
<proteinExistence type="evidence at transcript level"/>
<organism>
    <name type="scientific">Carassius auratus</name>
    <name type="common">Goldfish</name>
    <dbReference type="NCBI Taxonomy" id="7957"/>
    <lineage>
        <taxon>Eukaryota</taxon>
        <taxon>Metazoa</taxon>
        <taxon>Chordata</taxon>
        <taxon>Craniata</taxon>
        <taxon>Vertebrata</taxon>
        <taxon>Euteleostomi</taxon>
        <taxon>Actinopterygii</taxon>
        <taxon>Neopterygii</taxon>
        <taxon>Teleostei</taxon>
        <taxon>Ostariophysi</taxon>
        <taxon>Cypriniformes</taxon>
        <taxon>Cyprinidae</taxon>
        <taxon>Cyprininae</taxon>
        <taxon>Carassius</taxon>
    </lineage>
</organism>
<keyword id="KW-0963">Cytoplasm</keyword>
<keyword id="KW-0479">Metal-binding</keyword>
<keyword id="KW-0507">mRNA processing</keyword>
<keyword id="KW-1185">Reference proteome</keyword>
<keyword id="KW-0677">Repeat</keyword>
<keyword id="KW-0694">RNA-binding</keyword>
<keyword id="KW-0810">Translation regulation</keyword>
<keyword id="KW-0862">Zinc</keyword>
<comment type="function">
    <text evidence="1">Sequence-specific RNA-binding protein that regulates mRNA cytoplasmic polyadenylation and translation initiation during oocyte maturation and early development. Binds to the cytoplasmic polyadenylation element (CPE), an uridine-rich sequence element (consensus sequence 5'-UUUUUAU-3') within the mRNA 3'-UTR (By similarity).</text>
</comment>
<comment type="subunit">
    <text evidence="2 3">Interacts with kinesin, dynein, APLP1, APLP2, TENT2/GLD2 and APP. Both phosphorylated and non phosphorylated forms interact with APLP1 (By similarity). Interacts with TENT4B; the interaction is required for TENT4B-mediated translational control (By similarity).</text>
</comment>
<comment type="subcellular location">
    <subcellularLocation>
        <location evidence="1">Cytoplasm</location>
    </subcellularLocation>
</comment>
<comment type="similarity">
    <text evidence="6">Belongs to the RRM CPEB family.</text>
</comment>
<name>CPEB1_CARAU</name>
<sequence>MAFSLSENPRLLNCLDSDIPALSTCSNADTFSRMNTMLGNSLDLSGVCTTPTAKCKRDPFNGRPDSDLSAVRSRMLFLSGGQDSSRGLPDVSNWGLGLQSLSLSDWERPWSSHDSDPSAQTNTASLHGILGTPSHLSNRLPSYSEPSIGATDFLERFPGMARLNSQSFLDSHSISPVDSETSGFSSGSDHLSDLLSSLRISPSVPFLMSSMQRDPLKLALGSRLDHSSSPLTPPPSATSSGGLSHRWPGASIWPNWDLMKTPESPFSIEREAWLHRQAASINEATFTWSGQLPPRHYQNPIYSCKVFLGGVPWDITEAGLINTFKCYGPLSVEWPGKDGKHPRCPPKGNMPKGYVYLVFESDKSVRALLQDCTEDLLHPEGYSEYYFKMSSRRMRCKDAQVIPWVISDSNYVSCPSQRLDPRNTVFVGALHGMLNAEALASIMNDLFGGVVYAGIDTDKHKYPIGSGRVTFNNQRSYLKAVSAAFVEIKTPKFTKKVQIDPYLEDAICQSCSREPGPFFCRDKTCFKYYCRSCWHRQHSMDILSNHRPLMRNQKKRDVN</sequence>
<reference key="1">
    <citation type="submission" date="2000-06" db="EMBL/GenBank/DDBJ databases">
        <title>Goldfish cytoplasmic polyadenylation element binding protein (CPEB): its interaction with CPE of cyclin B mRNA and phosphorylation by cdk and Eg2 protein kinases.</title>
        <authorList>
            <person name="Katsu Y."/>
            <person name="Yamashita M."/>
            <person name="Ogawa K."/>
            <person name="Nagahama Y."/>
        </authorList>
    </citation>
    <scope>NUCLEOTIDE SEQUENCE [MRNA]</scope>
</reference>
<gene>
    <name type="primary">cpeb1</name>
    <name type="synonym">cpeb</name>
</gene>
<feature type="chain" id="PRO_0000269256" description="Cytoplasmic polyadenylation element-binding protein 1">
    <location>
        <begin position="1"/>
        <end position="559"/>
    </location>
</feature>
<feature type="domain" description="RRM 1" evidence="4">
    <location>
        <begin position="304"/>
        <end position="401"/>
    </location>
</feature>
<feature type="domain" description="RRM 2" evidence="4">
    <location>
        <begin position="423"/>
        <end position="504"/>
    </location>
</feature>
<feature type="region of interest" description="Disordered" evidence="5">
    <location>
        <begin position="223"/>
        <end position="244"/>
    </location>
</feature>
<feature type="binding site" evidence="1">
    <location>
        <position position="508"/>
    </location>
    <ligand>
        <name>Zn(2+)</name>
        <dbReference type="ChEBI" id="CHEBI:29105"/>
        <label>1</label>
    </ligand>
</feature>
<feature type="binding site" evidence="1">
    <location>
        <position position="511"/>
    </location>
    <ligand>
        <name>Zn(2+)</name>
        <dbReference type="ChEBI" id="CHEBI:29105"/>
        <label>1</label>
    </ligand>
</feature>
<feature type="binding site" evidence="1">
    <location>
        <position position="520"/>
    </location>
    <ligand>
        <name>Zn(2+)</name>
        <dbReference type="ChEBI" id="CHEBI:29105"/>
        <label>2</label>
    </ligand>
</feature>
<feature type="binding site" evidence="1">
    <location>
        <position position="525"/>
    </location>
    <ligand>
        <name>Zn(2+)</name>
        <dbReference type="ChEBI" id="CHEBI:29105"/>
        <label>2</label>
    </ligand>
</feature>
<feature type="binding site" evidence="1">
    <location>
        <position position="530"/>
    </location>
    <ligand>
        <name>Zn(2+)</name>
        <dbReference type="ChEBI" id="CHEBI:29105"/>
        <label>1</label>
    </ligand>
</feature>
<feature type="binding site" evidence="1">
    <location>
        <position position="533"/>
    </location>
    <ligand>
        <name>Zn(2+)</name>
        <dbReference type="ChEBI" id="CHEBI:29105"/>
        <label>1</label>
    </ligand>
</feature>
<feature type="binding site" evidence="1">
    <location>
        <position position="538"/>
    </location>
    <ligand>
        <name>Zn(2+)</name>
        <dbReference type="ChEBI" id="CHEBI:29105"/>
        <label>2</label>
    </ligand>
</feature>
<feature type="binding site" evidence="1">
    <location>
        <position position="546"/>
    </location>
    <ligand>
        <name>Zn(2+)</name>
        <dbReference type="ChEBI" id="CHEBI:29105"/>
        <label>2</label>
    </ligand>
</feature>